<organism>
    <name type="scientific">Sus scrofa</name>
    <name type="common">Pig</name>
    <dbReference type="NCBI Taxonomy" id="9823"/>
    <lineage>
        <taxon>Eukaryota</taxon>
        <taxon>Metazoa</taxon>
        <taxon>Chordata</taxon>
        <taxon>Craniata</taxon>
        <taxon>Vertebrata</taxon>
        <taxon>Euteleostomi</taxon>
        <taxon>Mammalia</taxon>
        <taxon>Eutheria</taxon>
        <taxon>Laurasiatheria</taxon>
        <taxon>Artiodactyla</taxon>
        <taxon>Suina</taxon>
        <taxon>Suidae</taxon>
        <taxon>Sus</taxon>
    </lineage>
</organism>
<feature type="chain" id="PRO_0000069058" description="Adrenocorticotropic hormone receptor">
    <location>
        <begin position="1"/>
        <end position="297"/>
    </location>
</feature>
<feature type="topological domain" description="Extracellular" evidence="1">
    <location>
        <begin position="1"/>
        <end position="23"/>
    </location>
</feature>
<feature type="transmembrane region" description="Helical; Name=1" evidence="1">
    <location>
        <begin position="24"/>
        <end position="49"/>
    </location>
</feature>
<feature type="topological domain" description="Cytoplasmic" evidence="1">
    <location>
        <begin position="50"/>
        <end position="58"/>
    </location>
</feature>
<feature type="transmembrane region" description="Helical; Name=2" evidence="1">
    <location>
        <begin position="59"/>
        <end position="79"/>
    </location>
</feature>
<feature type="topological domain" description="Extracellular" evidence="1">
    <location>
        <begin position="80"/>
        <end position="104"/>
    </location>
</feature>
<feature type="transmembrane region" description="Helical; Name=3" evidence="1">
    <location>
        <begin position="105"/>
        <end position="126"/>
    </location>
</feature>
<feature type="topological domain" description="Cytoplasmic" evidence="1">
    <location>
        <begin position="127"/>
        <end position="147"/>
    </location>
</feature>
<feature type="transmembrane region" description="Helical; Name=4" evidence="1">
    <location>
        <begin position="148"/>
        <end position="168"/>
    </location>
</feature>
<feature type="topological domain" description="Extracellular" evidence="1">
    <location>
        <begin position="169"/>
        <end position="180"/>
    </location>
</feature>
<feature type="transmembrane region" description="Helical; Name=5" evidence="1">
    <location>
        <begin position="181"/>
        <end position="199"/>
    </location>
</feature>
<feature type="topological domain" description="Cytoplasmic" evidence="1">
    <location>
        <begin position="200"/>
        <end position="217"/>
    </location>
</feature>
<feature type="transmembrane region" description="Helical; Name=6" evidence="1">
    <location>
        <begin position="218"/>
        <end position="244"/>
    </location>
</feature>
<feature type="topological domain" description="Extracellular" evidence="1">
    <location>
        <begin position="245"/>
        <end position="256"/>
    </location>
</feature>
<feature type="transmembrane region" description="Helical; Name=7" evidence="1">
    <location>
        <begin position="257"/>
        <end position="278"/>
    </location>
</feature>
<feature type="topological domain" description="Cytoplasmic" evidence="1">
    <location>
        <begin position="279"/>
        <end position="297"/>
    </location>
</feature>
<feature type="lipid moiety-binding region" description="S-palmitoyl cysteine" evidence="4">
    <location>
        <position position="293"/>
    </location>
</feature>
<feature type="glycosylation site" description="N-linked (GlcNAc...) asparagine" evidence="4">
    <location>
        <position position="12"/>
    </location>
</feature>
<feature type="glycosylation site" description="N-linked (GlcNAc...) asparagine" evidence="4">
    <location>
        <position position="17"/>
    </location>
</feature>
<feature type="disulfide bond" evidence="2">
    <location>
        <begin position="21"/>
        <end position="253"/>
    </location>
</feature>
<feature type="disulfide bond" evidence="2">
    <location>
        <begin position="245"/>
        <end position="251"/>
    </location>
</feature>
<gene>
    <name type="primary">MC2R</name>
</gene>
<proteinExistence type="evidence at transcript level"/>
<sequence>MKHITDLYESVNSTMSNKSDCPPVVLPEEVFFTISVIGVLENLIVLLAVIKNKNLQSPMYFFICSLAISDMLGSLYKILENILIIFRNMGYLEPRGGFESTADDVVDSLFILSLLGSICSLSAIAADRYITIFHALQYQRLVTPRRAAVVLLIIWACCIGSGITIVTFSHHVPAVIAFTALFPLMLVFILCLYGHMFLLARSHARRVSTLPRANMKGAITLTVLLGVFIFCWAPFVLHILLMTFCPADPYCACYLALFQVNAVLIMCNAIIDPFIYAFRSPELRDAFKKMIICKRYP</sequence>
<comment type="function">
    <text evidence="2 3">Hormone receptor primarily expressed in adrenal cortex that plays a key role in regulating adrenocortical function (By similarity). Upon corticotropin (ACTH) binding, facilitates the release of adrenal glucocorticoids, including cortisol and corticosterone. In addition, MC2R is required for fetal and neonatal adrenal gland development (By similarity). Mechanistically, activates adenylate cyclase (cAMP), the MAPK cascade as well as the cAMP-dependent protein kinase A pathway leading to steroidogenic factor 1/NR5A1-mediated transcriptional activation (By similarity).</text>
</comment>
<comment type="subunit">
    <text evidence="2">Homodimer. Interacts with corticotropin (ACTH). Interacts with MRAP; this interaction targets MC2R to the plasma membrane. Interacts with MRAP2; competing with MRAP for binding to MC2R and impairing the binding of corticotropin (ACTH).</text>
</comment>
<comment type="subcellular location">
    <subcellularLocation>
        <location evidence="2">Cell membrane</location>
        <topology evidence="2">Multi-pass membrane protein</topology>
    </subcellularLocation>
</comment>
<comment type="tissue specificity">
    <text evidence="6">Expressed in skin and adrenal gland tissues.</text>
</comment>
<comment type="PTM">
    <text evidence="2">Ubiquitinated by MGRN1 that may be involved in post-endocytic trafficking and/or degradation of internalized receptor.</text>
</comment>
<comment type="similarity">
    <text evidence="5">Belongs to the G-protein coupled receptor 1 family.</text>
</comment>
<evidence type="ECO:0000250" key="1"/>
<evidence type="ECO:0000250" key="2">
    <source>
        <dbReference type="UniProtKB" id="Q01718"/>
    </source>
</evidence>
<evidence type="ECO:0000250" key="3">
    <source>
        <dbReference type="UniProtKB" id="Q64326"/>
    </source>
</evidence>
<evidence type="ECO:0000255" key="4"/>
<evidence type="ECO:0000255" key="5">
    <source>
        <dbReference type="PROSITE-ProRule" id="PRU00521"/>
    </source>
</evidence>
<evidence type="ECO:0000269" key="6">
    <source>
    </source>
</evidence>
<dbReference type="EMBL" id="AF450083">
    <property type="protein sequence ID" value="AAO13968.1"/>
    <property type="molecule type" value="Genomic_DNA"/>
</dbReference>
<dbReference type="RefSeq" id="XP_003482080.1">
    <property type="nucleotide sequence ID" value="XM_003482032.4"/>
</dbReference>
<dbReference type="RefSeq" id="XP_013854659.1">
    <property type="nucleotide sequence ID" value="XM_013999205.1"/>
</dbReference>
<dbReference type="SMR" id="Q8HYN8"/>
<dbReference type="FunCoup" id="Q8HYN8">
    <property type="interactions" value="90"/>
</dbReference>
<dbReference type="GlyCosmos" id="Q8HYN8">
    <property type="glycosylation" value="2 sites, No reported glycans"/>
</dbReference>
<dbReference type="GlyGen" id="Q8HYN8">
    <property type="glycosylation" value="2 sites"/>
</dbReference>
<dbReference type="PaxDb" id="9823-ENSSSCP00000020075"/>
<dbReference type="Ensembl" id="ENSSSCT00000045304.3">
    <property type="protein sequence ID" value="ENSSSCP00000074587.1"/>
    <property type="gene ID" value="ENSSSCG00000039227.3"/>
</dbReference>
<dbReference type="Ensembl" id="ENSSSCT00045051914.1">
    <property type="protein sequence ID" value="ENSSSCP00045036132.1"/>
    <property type="gene ID" value="ENSSSCG00045030454.1"/>
</dbReference>
<dbReference type="Ensembl" id="ENSSSCT00070053548.1">
    <property type="protein sequence ID" value="ENSSSCP00070045393.1"/>
    <property type="gene ID" value="ENSSSCG00070026700.1"/>
</dbReference>
<dbReference type="Ensembl" id="ENSSSCT00085053720">
    <property type="protein sequence ID" value="ENSSSCP00085037378"/>
    <property type="gene ID" value="ENSSSCG00085028157"/>
</dbReference>
<dbReference type="Ensembl" id="ENSSSCT00105074431">
    <property type="protein sequence ID" value="ENSSSCP00105052747"/>
    <property type="gene ID" value="ENSSSCG00105039026"/>
</dbReference>
<dbReference type="Ensembl" id="ENSSSCT00110013196">
    <property type="protein sequence ID" value="ENSSSCP00110009274"/>
    <property type="gene ID" value="ENSSSCG00110006754"/>
</dbReference>
<dbReference type="Ensembl" id="ENSSSCT00115034302">
    <property type="protein sequence ID" value="ENSSSCP00115032576"/>
    <property type="gene ID" value="ENSSSCG00115019365"/>
</dbReference>
<dbReference type="Ensembl" id="ENSSSCT00130019961">
    <property type="protein sequence ID" value="ENSSSCP00130013682"/>
    <property type="gene ID" value="ENSSSCG00130010554"/>
</dbReference>
<dbReference type="GeneID" id="100739231"/>
<dbReference type="KEGG" id="ssc:100739231"/>
<dbReference type="CTD" id="4158"/>
<dbReference type="VGNC" id="VGNC:99701">
    <property type="gene designation" value="MC2R"/>
</dbReference>
<dbReference type="eggNOG" id="KOG3656">
    <property type="taxonomic scope" value="Eukaryota"/>
</dbReference>
<dbReference type="GeneTree" id="ENSGT01120000271819"/>
<dbReference type="HOGENOM" id="CLU_009579_13_0_1"/>
<dbReference type="InParanoid" id="Q8HYN8"/>
<dbReference type="OMA" id="LIKHPGQ"/>
<dbReference type="OrthoDB" id="9894375at2759"/>
<dbReference type="TreeFam" id="TF332646"/>
<dbReference type="Reactome" id="R-SSC-375276">
    <property type="pathway name" value="Peptide ligand-binding receptors"/>
</dbReference>
<dbReference type="Reactome" id="R-SSC-418555">
    <property type="pathway name" value="G alpha (s) signalling events"/>
</dbReference>
<dbReference type="Proteomes" id="UP000008227">
    <property type="component" value="Chromosome 6"/>
</dbReference>
<dbReference type="Proteomes" id="UP000314985">
    <property type="component" value="Chromosome 6"/>
</dbReference>
<dbReference type="Proteomes" id="UP000694570">
    <property type="component" value="Unplaced"/>
</dbReference>
<dbReference type="Proteomes" id="UP000694571">
    <property type="component" value="Unplaced"/>
</dbReference>
<dbReference type="Proteomes" id="UP000694720">
    <property type="component" value="Unplaced"/>
</dbReference>
<dbReference type="Proteomes" id="UP000694722">
    <property type="component" value="Unplaced"/>
</dbReference>
<dbReference type="Proteomes" id="UP000694723">
    <property type="component" value="Unplaced"/>
</dbReference>
<dbReference type="Proteomes" id="UP000694724">
    <property type="component" value="Unplaced"/>
</dbReference>
<dbReference type="Proteomes" id="UP000694725">
    <property type="component" value="Unplaced"/>
</dbReference>
<dbReference type="Proteomes" id="UP000694726">
    <property type="component" value="Unplaced"/>
</dbReference>
<dbReference type="Proteomes" id="UP000694727">
    <property type="component" value="Unplaced"/>
</dbReference>
<dbReference type="Proteomes" id="UP000694728">
    <property type="component" value="Unplaced"/>
</dbReference>
<dbReference type="Bgee" id="ENSSSCG00000039227">
    <property type="expression patterns" value="Expressed in oocyte and 4 other cell types or tissues"/>
</dbReference>
<dbReference type="GO" id="GO:0005737">
    <property type="term" value="C:cytoplasm"/>
    <property type="evidence" value="ECO:0000318"/>
    <property type="project" value="GO_Central"/>
</dbReference>
<dbReference type="GO" id="GO:0005886">
    <property type="term" value="C:plasma membrane"/>
    <property type="evidence" value="ECO:0000318"/>
    <property type="project" value="GO_Central"/>
</dbReference>
<dbReference type="GO" id="GO:0004978">
    <property type="term" value="F:corticotropin receptor activity"/>
    <property type="evidence" value="ECO:0007669"/>
    <property type="project" value="InterPro"/>
</dbReference>
<dbReference type="GO" id="GO:0004930">
    <property type="term" value="F:G protein-coupled receptor activity"/>
    <property type="evidence" value="ECO:0000318"/>
    <property type="project" value="GO_Central"/>
</dbReference>
<dbReference type="GO" id="GO:0007189">
    <property type="term" value="P:adenylate cyclase-activating G protein-coupled receptor signaling pathway"/>
    <property type="evidence" value="ECO:0000318"/>
    <property type="project" value="GO_Central"/>
</dbReference>
<dbReference type="GO" id="GO:0019222">
    <property type="term" value="P:regulation of metabolic process"/>
    <property type="evidence" value="ECO:0000318"/>
    <property type="project" value="GO_Central"/>
</dbReference>
<dbReference type="Gene3D" id="1.20.1070.10">
    <property type="entry name" value="Rhodopsin 7-helix transmembrane proteins"/>
    <property type="match status" value="1"/>
</dbReference>
<dbReference type="InterPro" id="IPR001168">
    <property type="entry name" value="ACTH_rcpt"/>
</dbReference>
<dbReference type="InterPro" id="IPR000276">
    <property type="entry name" value="GPCR_Rhodpsn"/>
</dbReference>
<dbReference type="InterPro" id="IPR017452">
    <property type="entry name" value="GPCR_Rhodpsn_7TM"/>
</dbReference>
<dbReference type="InterPro" id="IPR001671">
    <property type="entry name" value="Melcrt_ACTH_rcpt"/>
</dbReference>
<dbReference type="PANTHER" id="PTHR22750">
    <property type="entry name" value="G-PROTEIN COUPLED RECEPTOR"/>
    <property type="match status" value="1"/>
</dbReference>
<dbReference type="Pfam" id="PF00001">
    <property type="entry name" value="7tm_1"/>
    <property type="match status" value="2"/>
</dbReference>
<dbReference type="PRINTS" id="PR00520">
    <property type="entry name" value="ACTROPHINR"/>
</dbReference>
<dbReference type="PRINTS" id="PR00237">
    <property type="entry name" value="GPCRRHODOPSN"/>
</dbReference>
<dbReference type="PRINTS" id="PR00534">
    <property type="entry name" value="MCRFAMILY"/>
</dbReference>
<dbReference type="SMART" id="SM01381">
    <property type="entry name" value="7TM_GPCR_Srsx"/>
    <property type="match status" value="1"/>
</dbReference>
<dbReference type="SUPFAM" id="SSF81321">
    <property type="entry name" value="Family A G protein-coupled receptor-like"/>
    <property type="match status" value="1"/>
</dbReference>
<dbReference type="PROSITE" id="PS00237">
    <property type="entry name" value="G_PROTEIN_RECEP_F1_1"/>
    <property type="match status" value="1"/>
</dbReference>
<dbReference type="PROSITE" id="PS50262">
    <property type="entry name" value="G_PROTEIN_RECEP_F1_2"/>
    <property type="match status" value="1"/>
</dbReference>
<keyword id="KW-1003">Cell membrane</keyword>
<keyword id="KW-1015">Disulfide bond</keyword>
<keyword id="KW-0297">G-protein coupled receptor</keyword>
<keyword id="KW-0325">Glycoprotein</keyword>
<keyword id="KW-0449">Lipoprotein</keyword>
<keyword id="KW-0472">Membrane</keyword>
<keyword id="KW-0564">Palmitate</keyword>
<keyword id="KW-0675">Receptor</keyword>
<keyword id="KW-1185">Reference proteome</keyword>
<keyword id="KW-0807">Transducer</keyword>
<keyword id="KW-0812">Transmembrane</keyword>
<keyword id="KW-1133">Transmembrane helix</keyword>
<keyword id="KW-0832">Ubl conjugation</keyword>
<protein>
    <recommendedName>
        <fullName>Adrenocorticotropic hormone receptor</fullName>
        <shortName>ACTH receptor</shortName>
        <shortName>ACTH-R</shortName>
    </recommendedName>
    <alternativeName>
        <fullName>Adrenocorticotropin receptor</fullName>
    </alternativeName>
    <alternativeName>
        <fullName>Melanocortin receptor 2</fullName>
        <shortName>MC2-R</shortName>
    </alternativeName>
</protein>
<accession>Q8HYN8</accession>
<name>ACTHR_PIG</name>
<reference key="1">
    <citation type="journal article" date="2002" name="Anim. Genet.">
        <title>Characterization of the porcine melanocortin 2 receptor gene (MC2R).</title>
        <authorList>
            <person name="Jacobs K."/>
            <person name="Van Poucke M."/>
            <person name="Mattheeuws M."/>
            <person name="Chardon P."/>
            <person name="Yerle M."/>
            <person name="Rohrer G."/>
            <person name="Van Zeveren A."/>
            <person name="Peelman L.J."/>
        </authorList>
    </citation>
    <scope>NUCLEOTIDE SEQUENCE [GENOMIC DNA]</scope>
    <scope>TISSUE SPECIFICITY</scope>
</reference>